<dbReference type="EMBL" id="DQ345959">
    <property type="protein sequence ID" value="ABC73657.1"/>
    <property type="status" value="ALT_SEQ"/>
    <property type="molecule type" value="Genomic_DNA"/>
</dbReference>
<dbReference type="RefSeq" id="YP_538966.1">
    <property type="nucleotide sequence ID" value="NC_007944.1"/>
</dbReference>
<dbReference type="SMR" id="Q2L933"/>
<dbReference type="GeneID" id="3989134"/>
<dbReference type="KEGG" id="ghi:3989134"/>
<dbReference type="OrthoDB" id="9242at41938"/>
<dbReference type="Proteomes" id="UP000189702">
    <property type="component" value="Chloroplast Pltd"/>
</dbReference>
<dbReference type="GO" id="GO:0009535">
    <property type="term" value="C:chloroplast thylakoid membrane"/>
    <property type="evidence" value="ECO:0007669"/>
    <property type="project" value="UniProtKB-SubCell"/>
</dbReference>
<dbReference type="GO" id="GO:0016020">
    <property type="term" value="C:membrane"/>
    <property type="evidence" value="ECO:0000318"/>
    <property type="project" value="GO_Central"/>
</dbReference>
<dbReference type="GO" id="GO:0045158">
    <property type="term" value="F:electron transporter, transferring electrons within cytochrome b6/f complex of photosystem II activity"/>
    <property type="evidence" value="ECO:0007669"/>
    <property type="project" value="UniProtKB-UniRule"/>
</dbReference>
<dbReference type="GO" id="GO:0046872">
    <property type="term" value="F:metal ion binding"/>
    <property type="evidence" value="ECO:0007669"/>
    <property type="project" value="UniProtKB-KW"/>
</dbReference>
<dbReference type="GO" id="GO:0016491">
    <property type="term" value="F:oxidoreductase activity"/>
    <property type="evidence" value="ECO:0007669"/>
    <property type="project" value="InterPro"/>
</dbReference>
<dbReference type="GO" id="GO:0015979">
    <property type="term" value="P:photosynthesis"/>
    <property type="evidence" value="ECO:0007669"/>
    <property type="project" value="UniProtKB-UniRule"/>
</dbReference>
<dbReference type="GO" id="GO:0022904">
    <property type="term" value="P:respiratory electron transport chain"/>
    <property type="evidence" value="ECO:0007669"/>
    <property type="project" value="InterPro"/>
</dbReference>
<dbReference type="CDD" id="cd00284">
    <property type="entry name" value="Cytochrome_b_N"/>
    <property type="match status" value="1"/>
</dbReference>
<dbReference type="FunFam" id="1.20.810.10:FF:000001">
    <property type="entry name" value="Cytochrome b6"/>
    <property type="match status" value="1"/>
</dbReference>
<dbReference type="Gene3D" id="1.20.810.10">
    <property type="entry name" value="Cytochrome Bc1 Complex, Chain C"/>
    <property type="match status" value="1"/>
</dbReference>
<dbReference type="HAMAP" id="MF_00633">
    <property type="entry name" value="Cytb6_f_cytb6"/>
    <property type="match status" value="1"/>
</dbReference>
<dbReference type="InterPro" id="IPR005797">
    <property type="entry name" value="Cyt_b/b6_N"/>
</dbReference>
<dbReference type="InterPro" id="IPR023530">
    <property type="entry name" value="Cyt_B6_PetB"/>
</dbReference>
<dbReference type="InterPro" id="IPR027387">
    <property type="entry name" value="Cytb/b6-like_sf"/>
</dbReference>
<dbReference type="InterPro" id="IPR048259">
    <property type="entry name" value="Cytochrome_b_N_euk/bac"/>
</dbReference>
<dbReference type="InterPro" id="IPR016174">
    <property type="entry name" value="Di-haem_cyt_TM"/>
</dbReference>
<dbReference type="NCBIfam" id="NF002990">
    <property type="entry name" value="PRK03735.1"/>
    <property type="match status" value="1"/>
</dbReference>
<dbReference type="PANTHER" id="PTHR19271">
    <property type="entry name" value="CYTOCHROME B"/>
    <property type="match status" value="1"/>
</dbReference>
<dbReference type="PANTHER" id="PTHR19271:SF16">
    <property type="entry name" value="CYTOCHROME B"/>
    <property type="match status" value="1"/>
</dbReference>
<dbReference type="Pfam" id="PF00033">
    <property type="entry name" value="Cytochrome_B"/>
    <property type="match status" value="1"/>
</dbReference>
<dbReference type="PIRSF" id="PIRSF000032">
    <property type="entry name" value="Cytochrome_b6"/>
    <property type="match status" value="1"/>
</dbReference>
<dbReference type="SUPFAM" id="SSF81342">
    <property type="entry name" value="Transmembrane di-heme cytochromes"/>
    <property type="match status" value="1"/>
</dbReference>
<dbReference type="PROSITE" id="PS51002">
    <property type="entry name" value="CYTB_NTER"/>
    <property type="match status" value="1"/>
</dbReference>
<proteinExistence type="inferred from homology"/>
<accession>Q2L933</accession>
<name>CYB6_GOSHI</name>
<gene>
    <name evidence="1" type="primary">petB</name>
</gene>
<keyword id="KW-0150">Chloroplast</keyword>
<keyword id="KW-0249">Electron transport</keyword>
<keyword id="KW-0349">Heme</keyword>
<keyword id="KW-0408">Iron</keyword>
<keyword id="KW-0472">Membrane</keyword>
<keyword id="KW-0479">Metal-binding</keyword>
<keyword id="KW-0602">Photosynthesis</keyword>
<keyword id="KW-0934">Plastid</keyword>
<keyword id="KW-1185">Reference proteome</keyword>
<keyword id="KW-0793">Thylakoid</keyword>
<keyword id="KW-0812">Transmembrane</keyword>
<keyword id="KW-1133">Transmembrane helix</keyword>
<keyword id="KW-0813">Transport</keyword>
<reference key="1">
    <citation type="journal article" date="2006" name="BMC Genomics">
        <title>The complete chloroplast genome sequence of Gossypium hirsutum: organization and phylogenetic relationships to other angiosperms.</title>
        <authorList>
            <person name="Lee S.-B."/>
            <person name="Kaittanis C."/>
            <person name="Jansen R.K."/>
            <person name="Hostetler J.B."/>
            <person name="Tallon L.J."/>
            <person name="Town C.D."/>
            <person name="Daniell H."/>
        </authorList>
    </citation>
    <scope>NUCLEOTIDE SEQUENCE [LARGE SCALE GENOMIC DNA]</scope>
    <source>
        <strain>cv. Coker 310FR</strain>
    </source>
</reference>
<geneLocation type="chloroplast"/>
<comment type="function">
    <text evidence="1">Component of the cytochrome b6-f complex, which mediates electron transfer between photosystem II (PSII) and photosystem I (PSI), cyclic electron flow around PSI, and state transitions.</text>
</comment>
<comment type="cofactor">
    <cofactor evidence="1">
        <name>heme b</name>
        <dbReference type="ChEBI" id="CHEBI:60344"/>
    </cofactor>
    <text evidence="1">Binds 2 heme b groups non-covalently with two histidine residues as axial ligands.</text>
</comment>
<comment type="cofactor">
    <cofactor evidence="1">
        <name>heme c</name>
        <dbReference type="ChEBI" id="CHEBI:61717"/>
    </cofactor>
    <text evidence="1">Binds one heme group covalently by a single cysteine link with no axial amino acid ligand. This heme was named heme ci.</text>
</comment>
<comment type="subunit">
    <text evidence="1">The 4 large subunits of the cytochrome b6-f complex are cytochrome b6, subunit IV (17 kDa polypeptide, PetD), cytochrome f and the Rieske protein, while the 4 small subunits are PetG, PetL, PetM and PetN. The complex functions as a dimer.</text>
</comment>
<comment type="subcellular location">
    <subcellularLocation>
        <location evidence="1">Plastid</location>
        <location evidence="1">Chloroplast thylakoid membrane</location>
        <topology evidence="1">Multi-pass membrane protein</topology>
    </subcellularLocation>
</comment>
<comment type="miscellaneous">
    <text evidence="1">Heme 1 (or BH or b566) is high-potential and absorbs at about 566 nm, and heme 2 (or BL or b562) is low-potential and absorbs at about 562 nm.</text>
</comment>
<comment type="similarity">
    <text evidence="1">Belongs to the cytochrome b family. PetB subfamily.</text>
</comment>
<comment type="sequence caution" evidence="2">
    <conflict type="erroneous gene model prediction">
        <sequence resource="EMBL-CDS" id="ABC73657"/>
    </conflict>
    <text>The proposed translation is equivalent to the unspliced form that is know to occur in some monocots.</text>
</comment>
<organism>
    <name type="scientific">Gossypium hirsutum</name>
    <name type="common">Upland cotton</name>
    <name type="synonym">Gossypium mexicanum</name>
    <dbReference type="NCBI Taxonomy" id="3635"/>
    <lineage>
        <taxon>Eukaryota</taxon>
        <taxon>Viridiplantae</taxon>
        <taxon>Streptophyta</taxon>
        <taxon>Embryophyta</taxon>
        <taxon>Tracheophyta</taxon>
        <taxon>Spermatophyta</taxon>
        <taxon>Magnoliopsida</taxon>
        <taxon>eudicotyledons</taxon>
        <taxon>Gunneridae</taxon>
        <taxon>Pentapetalae</taxon>
        <taxon>rosids</taxon>
        <taxon>malvids</taxon>
        <taxon>Malvales</taxon>
        <taxon>Malvaceae</taxon>
        <taxon>Malvoideae</taxon>
        <taxon>Gossypium</taxon>
    </lineage>
</organism>
<evidence type="ECO:0000255" key="1">
    <source>
        <dbReference type="HAMAP-Rule" id="MF_00633"/>
    </source>
</evidence>
<evidence type="ECO:0000305" key="2"/>
<sequence>MSKVYDWFEERLEIQAIADDITSKYVPPHVNIFYCLGGITLTCFLVQVATGFAMTFYYRPTVTEAFASVQYIMTEANFGWLIRSVHRWSASMMVLMMILHVFRVYLTGGFKKPRELTWVTGVVLGVLTASFGVTGYSLPRDQIGYWAVKIVTGVPEAIPVIGSPLVELLRGSASVGQSTLTRFYSLHTFVLPLLTAVFMLMHFLMIRKQGISGPL</sequence>
<protein>
    <recommendedName>
        <fullName evidence="1">Cytochrome b6</fullName>
    </recommendedName>
</protein>
<feature type="chain" id="PRO_0000275318" description="Cytochrome b6">
    <location>
        <begin position="1"/>
        <end position="215"/>
    </location>
</feature>
<feature type="transmembrane region" description="Helical" evidence="1">
    <location>
        <begin position="32"/>
        <end position="52"/>
    </location>
</feature>
<feature type="transmembrane region" description="Helical" evidence="1">
    <location>
        <begin position="90"/>
        <end position="110"/>
    </location>
</feature>
<feature type="transmembrane region" description="Helical" evidence="1">
    <location>
        <begin position="116"/>
        <end position="136"/>
    </location>
</feature>
<feature type="transmembrane region" description="Helical" evidence="1">
    <location>
        <begin position="186"/>
        <end position="206"/>
    </location>
</feature>
<feature type="binding site" description="covalent" evidence="1">
    <location>
        <position position="35"/>
    </location>
    <ligand>
        <name>heme c</name>
        <dbReference type="ChEBI" id="CHEBI:61717"/>
    </ligand>
</feature>
<feature type="binding site" description="axial binding residue" evidence="1">
    <location>
        <position position="86"/>
    </location>
    <ligand>
        <name>heme b</name>
        <dbReference type="ChEBI" id="CHEBI:60344"/>
        <label>2</label>
    </ligand>
    <ligandPart>
        <name>Fe</name>
        <dbReference type="ChEBI" id="CHEBI:18248"/>
    </ligandPart>
</feature>
<feature type="binding site" description="axial binding residue" evidence="1">
    <location>
        <position position="100"/>
    </location>
    <ligand>
        <name>heme b</name>
        <dbReference type="ChEBI" id="CHEBI:60344"/>
        <label>1</label>
    </ligand>
    <ligandPart>
        <name>Fe</name>
        <dbReference type="ChEBI" id="CHEBI:18248"/>
    </ligandPart>
</feature>
<feature type="binding site" description="axial binding residue" evidence="1">
    <location>
        <position position="187"/>
    </location>
    <ligand>
        <name>heme b</name>
        <dbReference type="ChEBI" id="CHEBI:60344"/>
        <label>2</label>
    </ligand>
    <ligandPart>
        <name>Fe</name>
        <dbReference type="ChEBI" id="CHEBI:18248"/>
    </ligandPart>
</feature>
<feature type="binding site" description="axial binding residue" evidence="1">
    <location>
        <position position="202"/>
    </location>
    <ligand>
        <name>heme b</name>
        <dbReference type="ChEBI" id="CHEBI:60344"/>
        <label>1</label>
    </ligand>
    <ligandPart>
        <name>Fe</name>
        <dbReference type="ChEBI" id="CHEBI:18248"/>
    </ligandPart>
</feature>